<name>MTNC_PSEA8</name>
<keyword id="KW-0028">Amino-acid biosynthesis</keyword>
<keyword id="KW-0378">Hydrolase</keyword>
<keyword id="KW-0460">Magnesium</keyword>
<keyword id="KW-0479">Metal-binding</keyword>
<keyword id="KW-0486">Methionine biosynthesis</keyword>
<comment type="function">
    <text evidence="1">Bifunctional enzyme that catalyzes the enolization of 2,3-diketo-5-methylthiopentyl-1-phosphate (DK-MTP-1-P) into the intermediate 2-hydroxy-3-keto-5-methylthiopentenyl-1-phosphate (HK-MTPenyl-1-P), which is then dephosphorylated to form the acireductone 1,2-dihydroxy-3-keto-5-methylthiopentene (DHK-MTPene).</text>
</comment>
<comment type="catalytic activity">
    <reaction evidence="1">
        <text>5-methylsulfanyl-2,3-dioxopentyl phosphate + H2O = 1,2-dihydroxy-5-(methylsulfanyl)pent-1-en-3-one + phosphate</text>
        <dbReference type="Rhea" id="RHEA:21700"/>
        <dbReference type="ChEBI" id="CHEBI:15377"/>
        <dbReference type="ChEBI" id="CHEBI:43474"/>
        <dbReference type="ChEBI" id="CHEBI:49252"/>
        <dbReference type="ChEBI" id="CHEBI:58828"/>
        <dbReference type="EC" id="3.1.3.77"/>
    </reaction>
</comment>
<comment type="cofactor">
    <cofactor evidence="1">
        <name>Mg(2+)</name>
        <dbReference type="ChEBI" id="CHEBI:18420"/>
    </cofactor>
    <text evidence="1">Binds 1 Mg(2+) ion per subunit.</text>
</comment>
<comment type="pathway">
    <text evidence="1">Amino-acid biosynthesis; L-methionine biosynthesis via salvage pathway; L-methionine from S-methyl-5-thio-alpha-D-ribose 1-phosphate: step 3/6.</text>
</comment>
<comment type="pathway">
    <text evidence="1">Amino-acid biosynthesis; L-methionine biosynthesis via salvage pathway; L-methionine from S-methyl-5-thio-alpha-D-ribose 1-phosphate: step 4/6.</text>
</comment>
<comment type="subunit">
    <text evidence="1">Monomer.</text>
</comment>
<comment type="similarity">
    <text evidence="1">Belongs to the HAD-like hydrolase superfamily. MasA/MtnC family.</text>
</comment>
<organism>
    <name type="scientific">Pseudomonas aeruginosa (strain LESB58)</name>
    <dbReference type="NCBI Taxonomy" id="557722"/>
    <lineage>
        <taxon>Bacteria</taxon>
        <taxon>Pseudomonadati</taxon>
        <taxon>Pseudomonadota</taxon>
        <taxon>Gammaproteobacteria</taxon>
        <taxon>Pseudomonadales</taxon>
        <taxon>Pseudomonadaceae</taxon>
        <taxon>Pseudomonas</taxon>
    </lineage>
</organism>
<dbReference type="EC" id="3.1.3.77" evidence="1"/>
<dbReference type="EMBL" id="FM209186">
    <property type="protein sequence ID" value="CAW28369.1"/>
    <property type="molecule type" value="Genomic_DNA"/>
</dbReference>
<dbReference type="RefSeq" id="WP_012614299.1">
    <property type="nucleotide sequence ID" value="NC_011770.1"/>
</dbReference>
<dbReference type="SMR" id="B7UV36"/>
<dbReference type="KEGG" id="pag:PLES_36421"/>
<dbReference type="HOGENOM" id="CLU_023273_0_0_6"/>
<dbReference type="UniPathway" id="UPA00904">
    <property type="reaction ID" value="UER00876"/>
</dbReference>
<dbReference type="UniPathway" id="UPA00904">
    <property type="reaction ID" value="UER00877"/>
</dbReference>
<dbReference type="GO" id="GO:0043715">
    <property type="term" value="F:2,3-diketo-5-methylthiopentyl-1-phosphate enolase activity"/>
    <property type="evidence" value="ECO:0007669"/>
    <property type="project" value="UniProtKB-UniRule"/>
</dbReference>
<dbReference type="GO" id="GO:0043716">
    <property type="term" value="F:2-hydroxy-3-keto-5-methylthiopentenyl-1-phosphate phosphatase activity"/>
    <property type="evidence" value="ECO:0007669"/>
    <property type="project" value="UniProtKB-UniRule"/>
</dbReference>
<dbReference type="GO" id="GO:0043874">
    <property type="term" value="F:acireductone synthase activity"/>
    <property type="evidence" value="ECO:0007669"/>
    <property type="project" value="UniProtKB-EC"/>
</dbReference>
<dbReference type="GO" id="GO:0000287">
    <property type="term" value="F:magnesium ion binding"/>
    <property type="evidence" value="ECO:0007669"/>
    <property type="project" value="UniProtKB-UniRule"/>
</dbReference>
<dbReference type="GO" id="GO:0019509">
    <property type="term" value="P:L-methionine salvage from methylthioadenosine"/>
    <property type="evidence" value="ECO:0007669"/>
    <property type="project" value="UniProtKB-UniRule"/>
</dbReference>
<dbReference type="CDD" id="cd01629">
    <property type="entry name" value="HAD_EP"/>
    <property type="match status" value="1"/>
</dbReference>
<dbReference type="FunFam" id="1.10.720.60:FF:000003">
    <property type="entry name" value="Enolase-phosphatase E1"/>
    <property type="match status" value="1"/>
</dbReference>
<dbReference type="FunFam" id="3.40.50.1000:FF:000079">
    <property type="entry name" value="Enolase-phosphatase E1"/>
    <property type="match status" value="1"/>
</dbReference>
<dbReference type="Gene3D" id="1.10.720.60">
    <property type="match status" value="1"/>
</dbReference>
<dbReference type="Gene3D" id="3.40.50.1000">
    <property type="entry name" value="HAD superfamily/HAD-like"/>
    <property type="match status" value="1"/>
</dbReference>
<dbReference type="HAMAP" id="MF_01681">
    <property type="entry name" value="Salvage_MtnC"/>
    <property type="match status" value="1"/>
</dbReference>
<dbReference type="InterPro" id="IPR023943">
    <property type="entry name" value="Enolase-ppase_E1"/>
</dbReference>
<dbReference type="InterPro" id="IPR036412">
    <property type="entry name" value="HAD-like_sf"/>
</dbReference>
<dbReference type="InterPro" id="IPR006439">
    <property type="entry name" value="HAD-SF_hydro_IA"/>
</dbReference>
<dbReference type="InterPro" id="IPR023214">
    <property type="entry name" value="HAD_sf"/>
</dbReference>
<dbReference type="NCBIfam" id="TIGR01691">
    <property type="entry name" value="enolase-ppase"/>
    <property type="match status" value="1"/>
</dbReference>
<dbReference type="PANTHER" id="PTHR20371">
    <property type="entry name" value="ENOLASE-PHOSPHATASE E1"/>
    <property type="match status" value="1"/>
</dbReference>
<dbReference type="PANTHER" id="PTHR20371:SF1">
    <property type="entry name" value="ENOLASE-PHOSPHATASE E1"/>
    <property type="match status" value="1"/>
</dbReference>
<dbReference type="Pfam" id="PF00702">
    <property type="entry name" value="Hydrolase"/>
    <property type="match status" value="1"/>
</dbReference>
<dbReference type="PRINTS" id="PR00413">
    <property type="entry name" value="HADHALOGNASE"/>
</dbReference>
<dbReference type="SFLD" id="SFLDG01133">
    <property type="entry name" value="C1.5.4:_Enolase-phosphatase_Li"/>
    <property type="match status" value="1"/>
</dbReference>
<dbReference type="SFLD" id="SFLDF00044">
    <property type="entry name" value="enolase-phosphatase"/>
    <property type="match status" value="1"/>
</dbReference>
<dbReference type="SUPFAM" id="SSF56784">
    <property type="entry name" value="HAD-like"/>
    <property type="match status" value="1"/>
</dbReference>
<protein>
    <recommendedName>
        <fullName evidence="1">Enolase-phosphatase E1</fullName>
        <ecNumber evidence="1">3.1.3.77</ecNumber>
    </recommendedName>
    <alternativeName>
        <fullName evidence="1">2,3-diketo-5-methylthio-1-phosphopentane phosphatase</fullName>
    </alternativeName>
</protein>
<accession>B7UV36</accession>
<sequence length="225" mass="24134">MTIKAILTDIEGTTSAVSFVFDVLFPYAARHLPDFVREHAGETEVAAQLAAVRAESGEADADVERVIAILLQWIAEDRKVTPLKALQGMVWAQGYRDGQLKGHVYPDAVQALREWKARGLDLYVYSSGSIQAQKLIFGCSEAGDLGSLFSGYFDTTSGPKRESASYARIAGAIGLPAAEILFLSDVVQELDAARDAGMRTLGLAREGGSLDGHPTVASFADILVE</sequence>
<feature type="chain" id="PRO_1000187392" description="Enolase-phosphatase E1">
    <location>
        <begin position="1"/>
        <end position="225"/>
    </location>
</feature>
<evidence type="ECO:0000255" key="1">
    <source>
        <dbReference type="HAMAP-Rule" id="MF_01681"/>
    </source>
</evidence>
<proteinExistence type="inferred from homology"/>
<gene>
    <name evidence="1" type="primary">mtnC</name>
    <name type="ordered locus">PLES_36421</name>
</gene>
<reference key="1">
    <citation type="journal article" date="2009" name="Genome Res.">
        <title>Newly introduced genomic prophage islands are critical determinants of in vivo competitiveness in the Liverpool epidemic strain of Pseudomonas aeruginosa.</title>
        <authorList>
            <person name="Winstanley C."/>
            <person name="Langille M.G.I."/>
            <person name="Fothergill J.L."/>
            <person name="Kukavica-Ibrulj I."/>
            <person name="Paradis-Bleau C."/>
            <person name="Sanschagrin F."/>
            <person name="Thomson N.R."/>
            <person name="Winsor G.L."/>
            <person name="Quail M.A."/>
            <person name="Lennard N."/>
            <person name="Bignell A."/>
            <person name="Clarke L."/>
            <person name="Seeger K."/>
            <person name="Saunders D."/>
            <person name="Harris D."/>
            <person name="Parkhill J."/>
            <person name="Hancock R.E.W."/>
            <person name="Brinkman F.S.L."/>
            <person name="Levesque R.C."/>
        </authorList>
    </citation>
    <scope>NUCLEOTIDE SEQUENCE [LARGE SCALE GENOMIC DNA]</scope>
    <source>
        <strain>LESB58</strain>
    </source>
</reference>